<keyword id="KW-0106">Calcium</keyword>
<keyword id="KW-0325">Glycoprotein</keyword>
<keyword id="KW-0378">Hydrolase</keyword>
<keyword id="KW-0458">Lysosome</keyword>
<keyword id="KW-0479">Metal-binding</keyword>
<keyword id="KW-1185">Reference proteome</keyword>
<keyword id="KW-0964">Secreted</keyword>
<keyword id="KW-0732">Signal</keyword>
<accession>Q0IHJ2</accession>
<reference key="1">
    <citation type="submission" date="2006-09" db="EMBL/GenBank/DDBJ databases">
        <authorList>
            <consortium name="NIH - Xenopus Gene Collection (XGC) project"/>
        </authorList>
    </citation>
    <scope>NUCLEOTIDE SEQUENCE [LARGE SCALE MRNA]</scope>
    <source>
        <tissue>Testis</tissue>
    </source>
</reference>
<protein>
    <recommendedName>
        <fullName>Arylsulfatase K</fullName>
        <shortName>ASK</shortName>
        <ecNumber evidence="2">3.1.6.1</ecNumber>
    </recommendedName>
    <alternativeName>
        <fullName>Glucuronate-2-sulfatase</fullName>
        <ecNumber evidence="2">3.1.6.18</ecNumber>
    </alternativeName>
</protein>
<sequence>MIQKCIALSLFLFSALPEDNIVRALSLSPNNPKSNVVMVMSDAFDGRLTLLPENGLVSLPYINFMKKHGALFLNAYTNSPICCPSRAAMWSGLFPHLTESWNNYKCLDSDYPTWMDIVEKNGYVTQRLGKQDYKSGSHSLSNRVEAWTRDVPFLLRQEGRPCANLTGNKTQTRVMALDWKNVDTATAWIQKAAQNHSQPFFLYLGLNLPHPYPSETMGENFGSSTFLTSPYWLQKVPYKNVTIPKWKPLQSMHPVDYYSSYTKNCTAPFTEQEIRDIRAYYYAMCAEADGLLGEIISALNDTGLLGRTYVVFTSDHGELAMEHRQFYKMSMYEGSSHIPLLIMGPRISPGQQISTVVSLVDLYPTMLEIAGVQIPQNISGYSLMPLLSASSNKNVSPSISVHPNWAMSEFHGSDANASTYMLWDNYWKYVAYADGDSVAPQLFDLSSDPDELTNVAGQVPEKVQEMDKKLRSIVDYPKVSASVHVYNKQQFALWKASVGANYTNVIANLRWHADWNKRPRAYEMAIEKWIKSTRQH</sequence>
<dbReference type="EC" id="3.1.6.1" evidence="2"/>
<dbReference type="EC" id="3.1.6.18" evidence="2"/>
<dbReference type="EMBL" id="BC123132">
    <property type="protein sequence ID" value="AAI23133.1"/>
    <property type="molecule type" value="mRNA"/>
</dbReference>
<dbReference type="RefSeq" id="NP_001090303.1">
    <property type="nucleotide sequence ID" value="NM_001096834.1"/>
</dbReference>
<dbReference type="SMR" id="Q0IHJ2"/>
<dbReference type="GlyCosmos" id="Q0IHJ2">
    <property type="glycosylation" value="5 sites, No reported glycans"/>
</dbReference>
<dbReference type="DNASU" id="779212"/>
<dbReference type="GeneID" id="779212"/>
<dbReference type="KEGG" id="xla:779212"/>
<dbReference type="AGR" id="Xenbase:XB-GENE-1000372"/>
<dbReference type="CTD" id="779212"/>
<dbReference type="Xenbase" id="XB-GENE-1000372">
    <property type="gene designation" value="arsk.L"/>
</dbReference>
<dbReference type="OrthoDB" id="1886626at2759"/>
<dbReference type="Proteomes" id="UP000186698">
    <property type="component" value="Chromosome 1L"/>
</dbReference>
<dbReference type="Bgee" id="779212">
    <property type="expression patterns" value="Expressed in liver and 15 other cell types or tissues"/>
</dbReference>
<dbReference type="GO" id="GO:0005576">
    <property type="term" value="C:extracellular region"/>
    <property type="evidence" value="ECO:0000250"/>
    <property type="project" value="UniProtKB"/>
</dbReference>
<dbReference type="GO" id="GO:0005764">
    <property type="term" value="C:lysosome"/>
    <property type="evidence" value="ECO:0000250"/>
    <property type="project" value="UniProtKB"/>
</dbReference>
<dbReference type="GO" id="GO:0004065">
    <property type="term" value="F:arylsulfatase activity"/>
    <property type="evidence" value="ECO:0000250"/>
    <property type="project" value="UniProtKB"/>
</dbReference>
<dbReference type="GO" id="GO:0015024">
    <property type="term" value="F:glucuronate-2-sulfatase activity"/>
    <property type="evidence" value="ECO:0000250"/>
    <property type="project" value="UniProtKB"/>
</dbReference>
<dbReference type="GO" id="GO:0046872">
    <property type="term" value="F:metal ion binding"/>
    <property type="evidence" value="ECO:0007669"/>
    <property type="project" value="UniProtKB-KW"/>
</dbReference>
<dbReference type="CDD" id="cd16171">
    <property type="entry name" value="ARSK"/>
    <property type="match status" value="1"/>
</dbReference>
<dbReference type="FunFam" id="3.40.720.10:FF:000039">
    <property type="entry name" value="arylsulfatase K"/>
    <property type="match status" value="1"/>
</dbReference>
<dbReference type="Gene3D" id="3.40.720.10">
    <property type="entry name" value="Alkaline Phosphatase, subunit A"/>
    <property type="match status" value="1"/>
</dbReference>
<dbReference type="InterPro" id="IPR017850">
    <property type="entry name" value="Alkaline_phosphatase_core_sf"/>
</dbReference>
<dbReference type="InterPro" id="IPR047892">
    <property type="entry name" value="ARSK"/>
</dbReference>
<dbReference type="InterPro" id="IPR051849">
    <property type="entry name" value="GAG-degrading_sulfatase"/>
</dbReference>
<dbReference type="InterPro" id="IPR000917">
    <property type="entry name" value="Sulfatase_N"/>
</dbReference>
<dbReference type="PANTHER" id="PTHR46615">
    <property type="entry name" value="ARYLSULFATASE K"/>
    <property type="match status" value="1"/>
</dbReference>
<dbReference type="PANTHER" id="PTHR46615:SF1">
    <property type="entry name" value="ARYLSULFATASE K"/>
    <property type="match status" value="1"/>
</dbReference>
<dbReference type="Pfam" id="PF00884">
    <property type="entry name" value="Sulfatase"/>
    <property type="match status" value="1"/>
</dbReference>
<dbReference type="SUPFAM" id="SSF53649">
    <property type="entry name" value="Alkaline phosphatase-like"/>
    <property type="match status" value="1"/>
</dbReference>
<comment type="function">
    <text evidence="2">Catalyzes the hydrolysis of pseudosubstrates such as p-nitrocatechol sulfate and p-nitrophenyl sulfate (By similarity). Catalyzes the hydrolysis of the 2-sulfate groups of the 2-O-sulfo-D-glucuronate residues of chondroitin sulfate, heparin and heparitin sulfate (By similarity). Acts selectively on 2-sulfoglucuronate and lacks activity against 2-sulfoiduronate (By similarity).</text>
</comment>
<comment type="catalytic activity">
    <reaction evidence="2">
        <text>an aryl sulfate + H2O = a phenol + sulfate + H(+)</text>
        <dbReference type="Rhea" id="RHEA:17261"/>
        <dbReference type="ChEBI" id="CHEBI:15377"/>
        <dbReference type="ChEBI" id="CHEBI:15378"/>
        <dbReference type="ChEBI" id="CHEBI:16189"/>
        <dbReference type="ChEBI" id="CHEBI:33853"/>
        <dbReference type="ChEBI" id="CHEBI:140317"/>
        <dbReference type="EC" id="3.1.6.1"/>
    </reaction>
</comment>
<comment type="catalytic activity">
    <reaction evidence="2">
        <text>Hydrolysis of the 2-sulfate groups of the 2-O-sulfo-D-glucuronate residues of chondroitin sulfate, heparin and heparitin sulfate.</text>
        <dbReference type="EC" id="3.1.6.18"/>
    </reaction>
</comment>
<comment type="cofactor">
    <cofactor evidence="1">
        <name>Ca(2+)</name>
        <dbReference type="ChEBI" id="CHEBI:29108"/>
    </cofactor>
    <text evidence="1">Binds 1 Ca(2+) ion per subunit.</text>
</comment>
<comment type="subcellular location">
    <subcellularLocation>
        <location evidence="2">Secreted</location>
    </subcellularLocation>
    <subcellularLocation>
        <location evidence="2">Lysosome</location>
    </subcellularLocation>
</comment>
<comment type="PTM">
    <text evidence="2">The conversion to 3-oxoalanine (also known as C-formylglycine, FGly), of a serine or cysteine residue in prokaryotes and of a cysteine residue in eukaryotes, is critical for catalytic activity.</text>
</comment>
<comment type="similarity">
    <text evidence="4">Belongs to the sulfatase family.</text>
</comment>
<gene>
    <name type="primary">arsk</name>
</gene>
<name>ARSK_XENLA</name>
<evidence type="ECO:0000250" key="1">
    <source>
        <dbReference type="UniProtKB" id="P15289"/>
    </source>
</evidence>
<evidence type="ECO:0000250" key="2">
    <source>
        <dbReference type="UniProtKB" id="Q6UWY0"/>
    </source>
</evidence>
<evidence type="ECO:0000255" key="3"/>
<evidence type="ECO:0000305" key="4"/>
<organism>
    <name type="scientific">Xenopus laevis</name>
    <name type="common">African clawed frog</name>
    <dbReference type="NCBI Taxonomy" id="8355"/>
    <lineage>
        <taxon>Eukaryota</taxon>
        <taxon>Metazoa</taxon>
        <taxon>Chordata</taxon>
        <taxon>Craniata</taxon>
        <taxon>Vertebrata</taxon>
        <taxon>Euteleostomi</taxon>
        <taxon>Amphibia</taxon>
        <taxon>Batrachia</taxon>
        <taxon>Anura</taxon>
        <taxon>Pipoidea</taxon>
        <taxon>Pipidae</taxon>
        <taxon>Xenopodinae</taxon>
        <taxon>Xenopus</taxon>
        <taxon>Xenopus</taxon>
    </lineage>
</organism>
<feature type="signal peptide" evidence="3">
    <location>
        <begin position="1"/>
        <end position="24"/>
    </location>
</feature>
<feature type="chain" id="PRO_0000356290" description="Arylsulfatase K">
    <location>
        <begin position="25"/>
        <end position="536"/>
    </location>
</feature>
<feature type="active site" description="Nucleophile" evidence="1">
    <location>
        <position position="82"/>
    </location>
</feature>
<feature type="binding site" evidence="1">
    <location>
        <position position="42"/>
    </location>
    <ligand>
        <name>Ca(2+)</name>
        <dbReference type="ChEBI" id="CHEBI:29108"/>
    </ligand>
</feature>
<feature type="binding site" description="via 3-oxoalanine" evidence="1">
    <location>
        <position position="82"/>
    </location>
    <ligand>
        <name>Ca(2+)</name>
        <dbReference type="ChEBI" id="CHEBI:29108"/>
    </ligand>
</feature>
<feature type="binding site" evidence="1">
    <location>
        <position position="130"/>
    </location>
    <ligand>
        <name>substrate</name>
    </ligand>
</feature>
<feature type="binding site" evidence="1">
    <location>
        <position position="253"/>
    </location>
    <ligand>
        <name>substrate</name>
    </ligand>
</feature>
<feature type="binding site" evidence="1">
    <location>
        <position position="315"/>
    </location>
    <ligand>
        <name>Ca(2+)</name>
        <dbReference type="ChEBI" id="CHEBI:29108"/>
    </ligand>
</feature>
<feature type="binding site" evidence="1">
    <location>
        <position position="316"/>
    </location>
    <ligand>
        <name>Ca(2+)</name>
        <dbReference type="ChEBI" id="CHEBI:29108"/>
    </ligand>
</feature>
<feature type="modified residue" description="3-oxoalanine (Cys)" evidence="2">
    <location>
        <position position="82"/>
    </location>
</feature>
<feature type="glycosylation site" description="N-linked (GlcNAc...) asparagine" evidence="3">
    <location>
        <position position="195"/>
    </location>
</feature>
<feature type="glycosylation site" description="N-linked (GlcNAc...) asparagine" evidence="3">
    <location>
        <position position="264"/>
    </location>
</feature>
<feature type="glycosylation site" description="N-linked (GlcNAc...) asparagine" evidence="3">
    <location>
        <position position="377"/>
    </location>
</feature>
<feature type="glycosylation site" description="N-linked (GlcNAc...) asparagine" evidence="3">
    <location>
        <position position="416"/>
    </location>
</feature>
<feature type="glycosylation site" description="N-linked (GlcNAc...) asparagine" evidence="3">
    <location>
        <position position="501"/>
    </location>
</feature>
<proteinExistence type="evidence at transcript level"/>